<accession>A5I6W8</accession>
<accession>A7G853</accession>
<dbReference type="EC" id="4.1.1.23" evidence="1"/>
<dbReference type="EMBL" id="CP000727">
    <property type="protein sequence ID" value="ABS39074.1"/>
    <property type="molecule type" value="Genomic_DNA"/>
</dbReference>
<dbReference type="EMBL" id="AM412317">
    <property type="protein sequence ID" value="CAL84800.1"/>
    <property type="molecule type" value="Genomic_DNA"/>
</dbReference>
<dbReference type="RefSeq" id="WP_003361662.1">
    <property type="nucleotide sequence ID" value="NC_009698.1"/>
</dbReference>
<dbReference type="RefSeq" id="YP_001255728.1">
    <property type="nucleotide sequence ID" value="NC_009495.1"/>
</dbReference>
<dbReference type="RefSeq" id="YP_001388968.1">
    <property type="nucleotide sequence ID" value="NC_009698.1"/>
</dbReference>
<dbReference type="SMR" id="A5I6W8"/>
<dbReference type="GeneID" id="5187132"/>
<dbReference type="KEGG" id="cbh:CLC_3149"/>
<dbReference type="KEGG" id="cbo:CBO3238"/>
<dbReference type="PATRIC" id="fig|413999.7.peg.3217"/>
<dbReference type="HOGENOM" id="CLU_060704_1_1_9"/>
<dbReference type="UniPathway" id="UPA00070">
    <property type="reaction ID" value="UER00120"/>
</dbReference>
<dbReference type="PRO" id="PR:A5I6W8"/>
<dbReference type="Proteomes" id="UP000001986">
    <property type="component" value="Chromosome"/>
</dbReference>
<dbReference type="GO" id="GO:0004590">
    <property type="term" value="F:orotidine-5'-phosphate decarboxylase activity"/>
    <property type="evidence" value="ECO:0007669"/>
    <property type="project" value="UniProtKB-UniRule"/>
</dbReference>
<dbReference type="GO" id="GO:0006207">
    <property type="term" value="P:'de novo' pyrimidine nucleobase biosynthetic process"/>
    <property type="evidence" value="ECO:0007669"/>
    <property type="project" value="InterPro"/>
</dbReference>
<dbReference type="GO" id="GO:0044205">
    <property type="term" value="P:'de novo' UMP biosynthetic process"/>
    <property type="evidence" value="ECO:0007669"/>
    <property type="project" value="UniProtKB-UniRule"/>
</dbReference>
<dbReference type="CDD" id="cd04725">
    <property type="entry name" value="OMP_decarboxylase_like"/>
    <property type="match status" value="1"/>
</dbReference>
<dbReference type="FunFam" id="3.20.20.70:FF:000246">
    <property type="entry name" value="Orotidine 5'-phosphate decarboxylase"/>
    <property type="match status" value="1"/>
</dbReference>
<dbReference type="Gene3D" id="3.20.20.70">
    <property type="entry name" value="Aldolase class I"/>
    <property type="match status" value="1"/>
</dbReference>
<dbReference type="HAMAP" id="MF_01215">
    <property type="entry name" value="OMPdecase_type2"/>
    <property type="match status" value="1"/>
</dbReference>
<dbReference type="InterPro" id="IPR013785">
    <property type="entry name" value="Aldolase_TIM"/>
</dbReference>
<dbReference type="InterPro" id="IPR011995">
    <property type="entry name" value="OMPdecase_type-2"/>
</dbReference>
<dbReference type="InterPro" id="IPR001754">
    <property type="entry name" value="OMPdeCOase_dom"/>
</dbReference>
<dbReference type="InterPro" id="IPR011060">
    <property type="entry name" value="RibuloseP-bd_barrel"/>
</dbReference>
<dbReference type="NCBIfam" id="TIGR02127">
    <property type="entry name" value="pyrF_sub2"/>
    <property type="match status" value="1"/>
</dbReference>
<dbReference type="PANTHER" id="PTHR43375">
    <property type="entry name" value="OROTIDINE 5'-PHOSPHATE DECARBOXYLASE"/>
    <property type="match status" value="1"/>
</dbReference>
<dbReference type="PANTHER" id="PTHR43375:SF1">
    <property type="entry name" value="OROTIDINE 5'-PHOSPHATE DECARBOXYLASE"/>
    <property type="match status" value="1"/>
</dbReference>
<dbReference type="Pfam" id="PF00215">
    <property type="entry name" value="OMPdecase"/>
    <property type="match status" value="1"/>
</dbReference>
<dbReference type="SMART" id="SM00934">
    <property type="entry name" value="OMPdecase"/>
    <property type="match status" value="1"/>
</dbReference>
<dbReference type="SUPFAM" id="SSF51366">
    <property type="entry name" value="Ribulose-phoshate binding barrel"/>
    <property type="match status" value="1"/>
</dbReference>
<name>PYRF_CLOBH</name>
<gene>
    <name evidence="1" type="primary">pyrF</name>
    <name type="ordered locus">CBO3238</name>
    <name type="ordered locus">CLC_3149</name>
</gene>
<proteinExistence type="inferred from homology"/>
<reference key="1">
    <citation type="journal article" date="2007" name="Genome Res.">
        <title>Genome sequence of a proteolytic (Group I) Clostridium botulinum strain Hall A and comparative analysis of the clostridial genomes.</title>
        <authorList>
            <person name="Sebaihia M."/>
            <person name="Peck M.W."/>
            <person name="Minton N.P."/>
            <person name="Thomson N.R."/>
            <person name="Holden M.T.G."/>
            <person name="Mitchell W.J."/>
            <person name="Carter A.T."/>
            <person name="Bentley S.D."/>
            <person name="Mason D.R."/>
            <person name="Crossman L."/>
            <person name="Paul C.J."/>
            <person name="Ivens A."/>
            <person name="Wells-Bennik M.H.J."/>
            <person name="Davis I.J."/>
            <person name="Cerdeno-Tarraga A.M."/>
            <person name="Churcher C."/>
            <person name="Quail M.A."/>
            <person name="Chillingworth T."/>
            <person name="Feltwell T."/>
            <person name="Fraser A."/>
            <person name="Goodhead I."/>
            <person name="Hance Z."/>
            <person name="Jagels K."/>
            <person name="Larke N."/>
            <person name="Maddison M."/>
            <person name="Moule S."/>
            <person name="Mungall K."/>
            <person name="Norbertczak H."/>
            <person name="Rabbinowitsch E."/>
            <person name="Sanders M."/>
            <person name="Simmonds M."/>
            <person name="White B."/>
            <person name="Whithead S."/>
            <person name="Parkhill J."/>
        </authorList>
    </citation>
    <scope>NUCLEOTIDE SEQUENCE [LARGE SCALE GENOMIC DNA]</scope>
    <source>
        <strain>Hall / ATCC 3502 / NCTC 13319 / Type A</strain>
    </source>
</reference>
<reference key="2">
    <citation type="journal article" date="2007" name="PLoS ONE">
        <title>Analysis of the neurotoxin complex genes in Clostridium botulinum A1-A4 and B1 strains: BoNT/A3, /Ba4 and /B1 clusters are located within plasmids.</title>
        <authorList>
            <person name="Smith T.J."/>
            <person name="Hill K.K."/>
            <person name="Foley B.T."/>
            <person name="Detter J.C."/>
            <person name="Munk A.C."/>
            <person name="Bruce D.C."/>
            <person name="Doggett N.A."/>
            <person name="Smith L.A."/>
            <person name="Marks J.D."/>
            <person name="Xie G."/>
            <person name="Brettin T.S."/>
        </authorList>
    </citation>
    <scope>NUCLEOTIDE SEQUENCE [LARGE SCALE GENOMIC DNA]</scope>
    <source>
        <strain>Hall / ATCC 3502 / NCTC 13319 / Type A</strain>
    </source>
</reference>
<comment type="catalytic activity">
    <reaction evidence="1">
        <text>orotidine 5'-phosphate + H(+) = UMP + CO2</text>
        <dbReference type="Rhea" id="RHEA:11596"/>
        <dbReference type="ChEBI" id="CHEBI:15378"/>
        <dbReference type="ChEBI" id="CHEBI:16526"/>
        <dbReference type="ChEBI" id="CHEBI:57538"/>
        <dbReference type="ChEBI" id="CHEBI:57865"/>
        <dbReference type="EC" id="4.1.1.23"/>
    </reaction>
</comment>
<comment type="pathway">
    <text evidence="1">Pyrimidine metabolism; UMP biosynthesis via de novo pathway; UMP from orotate: step 2/2.</text>
</comment>
<comment type="similarity">
    <text evidence="1">Belongs to the OMP decarboxylase family. Type 2 subfamily.</text>
</comment>
<organism>
    <name type="scientific">Clostridium botulinum (strain Hall / ATCC 3502 / NCTC 13319 / Type A)</name>
    <dbReference type="NCBI Taxonomy" id="441771"/>
    <lineage>
        <taxon>Bacteria</taxon>
        <taxon>Bacillati</taxon>
        <taxon>Bacillota</taxon>
        <taxon>Clostridia</taxon>
        <taxon>Eubacteriales</taxon>
        <taxon>Clostridiaceae</taxon>
        <taxon>Clostridium</taxon>
    </lineage>
</organism>
<sequence>MIIDKLYENVEKKGCVCVGLDTDISYLPKGFLNKFTNIEDAIFAFNQRIVDSTFDVSACYKVQIAYYEAMGIKGMILYKKTLEYIRKKGGIVIADIKRGDISATAKMYAKAHFEGDFESDFITLNPYMGMDTLEPYKDYFKNKEKGVFLLLRTSNEGSKDIQYLDLKDNKKVYNKVGEKIENIGKEFLGNCGYSSIGAVVGCTAEENNIRKELKHTFFLIPGYGAQGGKAEVAKSYLSGGNGGIVNSSRGILLAYKKYDEEGKNFEECARNEVINMKKTLQII</sequence>
<evidence type="ECO:0000255" key="1">
    <source>
        <dbReference type="HAMAP-Rule" id="MF_01215"/>
    </source>
</evidence>
<keyword id="KW-0210">Decarboxylase</keyword>
<keyword id="KW-0456">Lyase</keyword>
<keyword id="KW-0665">Pyrimidine biosynthesis</keyword>
<keyword id="KW-1185">Reference proteome</keyword>
<protein>
    <recommendedName>
        <fullName evidence="1">Orotidine 5'-phosphate decarboxylase</fullName>
        <ecNumber evidence="1">4.1.1.23</ecNumber>
    </recommendedName>
    <alternativeName>
        <fullName evidence="1">OMP decarboxylase</fullName>
        <shortName evidence="1">OMPDCase</shortName>
        <shortName evidence="1">OMPdecase</shortName>
    </alternativeName>
</protein>
<feature type="chain" id="PRO_1000066462" description="Orotidine 5'-phosphate decarboxylase">
    <location>
        <begin position="1"/>
        <end position="283"/>
    </location>
</feature>
<feature type="active site" description="Proton donor" evidence="1">
    <location>
        <position position="97"/>
    </location>
</feature>